<name>Y1571_ARATH</name>
<organism>
    <name type="scientific">Arabidopsis thaliana</name>
    <name type="common">Mouse-ear cress</name>
    <dbReference type="NCBI Taxonomy" id="3702"/>
    <lineage>
        <taxon>Eukaryota</taxon>
        <taxon>Viridiplantae</taxon>
        <taxon>Streptophyta</taxon>
        <taxon>Embryophyta</taxon>
        <taxon>Tracheophyta</taxon>
        <taxon>Spermatophyta</taxon>
        <taxon>Magnoliopsida</taxon>
        <taxon>eudicotyledons</taxon>
        <taxon>Gunneridae</taxon>
        <taxon>Pentapetalae</taxon>
        <taxon>rosids</taxon>
        <taxon>malvids</taxon>
        <taxon>Brassicales</taxon>
        <taxon>Brassicaceae</taxon>
        <taxon>Camelineae</taxon>
        <taxon>Arabidopsis</taxon>
    </lineage>
</organism>
<evidence type="ECO:0000250" key="1">
    <source>
        <dbReference type="UniProtKB" id="C0LGT6"/>
    </source>
</evidence>
<evidence type="ECO:0000250" key="2">
    <source>
        <dbReference type="UniProtKB" id="O22476"/>
    </source>
</evidence>
<evidence type="ECO:0000250" key="3">
    <source>
        <dbReference type="UniProtKB" id="Q9M0G7"/>
    </source>
</evidence>
<evidence type="ECO:0000255" key="4"/>
<evidence type="ECO:0000255" key="5">
    <source>
        <dbReference type="PROSITE-ProRule" id="PRU00159"/>
    </source>
</evidence>
<evidence type="ECO:0000255" key="6">
    <source>
        <dbReference type="PROSITE-ProRule" id="PRU10028"/>
    </source>
</evidence>
<evidence type="ECO:0000303" key="7">
    <source>
    </source>
</evidence>
<evidence type="ECO:0000303" key="8">
    <source>
    </source>
</evidence>
<evidence type="ECO:0000303" key="9">
    <source>
    </source>
</evidence>
<evidence type="ECO:0000305" key="10"/>
<comment type="catalytic activity">
    <reaction>
        <text>L-seryl-[protein] + ATP = O-phospho-L-seryl-[protein] + ADP + H(+)</text>
        <dbReference type="Rhea" id="RHEA:17989"/>
        <dbReference type="Rhea" id="RHEA-COMP:9863"/>
        <dbReference type="Rhea" id="RHEA-COMP:11604"/>
        <dbReference type="ChEBI" id="CHEBI:15378"/>
        <dbReference type="ChEBI" id="CHEBI:29999"/>
        <dbReference type="ChEBI" id="CHEBI:30616"/>
        <dbReference type="ChEBI" id="CHEBI:83421"/>
        <dbReference type="ChEBI" id="CHEBI:456216"/>
        <dbReference type="EC" id="2.7.11.1"/>
    </reaction>
</comment>
<comment type="catalytic activity">
    <reaction>
        <text>L-threonyl-[protein] + ATP = O-phospho-L-threonyl-[protein] + ADP + H(+)</text>
        <dbReference type="Rhea" id="RHEA:46608"/>
        <dbReference type="Rhea" id="RHEA-COMP:11060"/>
        <dbReference type="Rhea" id="RHEA-COMP:11605"/>
        <dbReference type="ChEBI" id="CHEBI:15378"/>
        <dbReference type="ChEBI" id="CHEBI:30013"/>
        <dbReference type="ChEBI" id="CHEBI:30616"/>
        <dbReference type="ChEBI" id="CHEBI:61977"/>
        <dbReference type="ChEBI" id="CHEBI:456216"/>
        <dbReference type="EC" id="2.7.11.1"/>
    </reaction>
</comment>
<comment type="interaction">
    <interactant intactId="EBI-20651291">
        <id>Q9LP24-3</id>
    </interactant>
    <interactant intactId="EBI-16954597">
        <id>C0LGE0</id>
        <label>At1g07650</label>
    </interactant>
    <organismsDiffer>false</organismsDiffer>
    <experiments>3</experiments>
</comment>
<comment type="interaction">
    <interactant intactId="EBI-20651291">
        <id>Q9LP24-3</id>
    </interactant>
    <interactant intactId="EBI-17123993">
        <id>Q9LT96</id>
        <label>At5g49770</label>
    </interactant>
    <organismsDiffer>false</organismsDiffer>
    <experiments>3</experiments>
</comment>
<comment type="interaction">
    <interactant intactId="EBI-20651291">
        <id>Q9LP24-3</id>
    </interactant>
    <interactant intactId="EBI-20652801">
        <id>C0LGN2</id>
        <label>LRR-RLK</label>
    </interactant>
    <organismsDiffer>false</organismsDiffer>
    <experiments>3</experiments>
</comment>
<comment type="subcellular location">
    <subcellularLocation>
        <location evidence="10">Membrane</location>
        <topology evidence="10">Single-pass type I membrane protein</topology>
    </subcellularLocation>
</comment>
<comment type="alternative products">
    <event type="alternative splicing"/>
    <isoform>
        <id>Q9LP24-1</id>
        <name>1</name>
        <sequence type="displayed"/>
    </isoform>
    <isoform>
        <id>Q9LP24-2</id>
        <name>2</name>
        <sequence type="described" ref="VSP_038434"/>
    </isoform>
    <isoform>
        <id>Q9LP24-3</id>
        <name>3</name>
        <sequence type="described" ref="VSP_038435"/>
    </isoform>
</comment>
<comment type="similarity">
    <text evidence="5">Belongs to the protein kinase superfamily. Ser/Thr protein kinase family.</text>
</comment>
<comment type="sequence caution" evidence="10">
    <conflict type="erroneous gene model prediction">
        <sequence resource="EMBL-CDS" id="AAF79881"/>
    </conflict>
</comment>
<comment type="sequence caution" evidence="10">
    <conflict type="erroneous initiation">
        <sequence resource="EMBL-CDS" id="AAK68748"/>
    </conflict>
</comment>
<dbReference type="EC" id="2.7.11.1"/>
<dbReference type="EMBL" id="AC021198">
    <property type="protein sequence ID" value="AAF79881.1"/>
    <property type="status" value="ALT_SEQ"/>
    <property type="molecule type" value="Genomic_DNA"/>
</dbReference>
<dbReference type="EMBL" id="CP002684">
    <property type="protein sequence ID" value="AEE31824.1"/>
    <property type="molecule type" value="Genomic_DNA"/>
</dbReference>
<dbReference type="EMBL" id="AK319165">
    <property type="protein sequence ID" value="BAH57280.1"/>
    <property type="molecule type" value="mRNA"/>
</dbReference>
<dbReference type="EMBL" id="FJ708647">
    <property type="protein sequence ID" value="ACN59243.1"/>
    <property type="molecule type" value="mRNA"/>
</dbReference>
<dbReference type="EMBL" id="AY042808">
    <property type="protein sequence ID" value="AAK68748.1"/>
    <property type="status" value="ALT_INIT"/>
    <property type="molecule type" value="mRNA"/>
</dbReference>
<dbReference type="PIR" id="B86479">
    <property type="entry name" value="B86479"/>
</dbReference>
<dbReference type="RefSeq" id="NP_174809.1">
    <molecule id="Q9LP24-1"/>
    <property type="nucleotide sequence ID" value="NM_103273.2"/>
</dbReference>
<dbReference type="SMR" id="Q9LP24"/>
<dbReference type="BioGRID" id="25707">
    <property type="interactions" value="14"/>
</dbReference>
<dbReference type="FunCoup" id="Q9LP24">
    <property type="interactions" value="104"/>
</dbReference>
<dbReference type="IntAct" id="Q9LP24">
    <property type="interactions" value="18"/>
</dbReference>
<dbReference type="STRING" id="3702.Q9LP24"/>
<dbReference type="GlyGen" id="Q9LP24">
    <property type="glycosylation" value="19 sites"/>
</dbReference>
<dbReference type="PaxDb" id="3702-AT1G35710.1"/>
<dbReference type="ProteomicsDB" id="242438">
    <molecule id="Q9LP24-1"/>
</dbReference>
<dbReference type="EnsemblPlants" id="AT1G35710.1">
    <molecule id="Q9LP24-1"/>
    <property type="protein sequence ID" value="AT1G35710.1"/>
    <property type="gene ID" value="AT1G35710"/>
</dbReference>
<dbReference type="GeneID" id="840475"/>
<dbReference type="Gramene" id="AT1G35710.1">
    <molecule id="Q9LP24-1"/>
    <property type="protein sequence ID" value="AT1G35710.1"/>
    <property type="gene ID" value="AT1G35710"/>
</dbReference>
<dbReference type="KEGG" id="ath:AT1G35710"/>
<dbReference type="Araport" id="AT1G35710"/>
<dbReference type="TAIR" id="AT1G35710"/>
<dbReference type="eggNOG" id="ENOG502QQYD">
    <property type="taxonomic scope" value="Eukaryota"/>
</dbReference>
<dbReference type="HOGENOM" id="CLU_000288_22_1_1"/>
<dbReference type="InParanoid" id="Q9LP24"/>
<dbReference type="OMA" id="CKGLFRV"/>
<dbReference type="PhylomeDB" id="Q9LP24"/>
<dbReference type="PRO" id="PR:Q9LP24"/>
<dbReference type="Proteomes" id="UP000006548">
    <property type="component" value="Chromosome 1"/>
</dbReference>
<dbReference type="ExpressionAtlas" id="Q9LP24">
    <property type="expression patterns" value="baseline and differential"/>
</dbReference>
<dbReference type="GO" id="GO:0016020">
    <property type="term" value="C:membrane"/>
    <property type="evidence" value="ECO:0007669"/>
    <property type="project" value="UniProtKB-SubCell"/>
</dbReference>
<dbReference type="GO" id="GO:0005524">
    <property type="term" value="F:ATP binding"/>
    <property type="evidence" value="ECO:0007669"/>
    <property type="project" value="UniProtKB-KW"/>
</dbReference>
<dbReference type="GO" id="GO:0106310">
    <property type="term" value="F:protein serine kinase activity"/>
    <property type="evidence" value="ECO:0007669"/>
    <property type="project" value="RHEA"/>
</dbReference>
<dbReference type="GO" id="GO:0004674">
    <property type="term" value="F:protein serine/threonine kinase activity"/>
    <property type="evidence" value="ECO:0007669"/>
    <property type="project" value="UniProtKB-KW"/>
</dbReference>
<dbReference type="FunFam" id="3.30.200.20:FF:000309">
    <property type="entry name" value="Leucine-rich repeat receptor protein kinase MSP1"/>
    <property type="match status" value="1"/>
</dbReference>
<dbReference type="FunFam" id="3.80.10.10:FF:000095">
    <property type="entry name" value="LRR receptor-like serine/threonine-protein kinase GSO1"/>
    <property type="match status" value="1"/>
</dbReference>
<dbReference type="FunFam" id="1.10.510.10:FF:000445">
    <property type="entry name" value="MDIS1-interacting receptor like kinase 2"/>
    <property type="match status" value="1"/>
</dbReference>
<dbReference type="FunFam" id="3.80.10.10:FF:000851">
    <property type="entry name" value="Probable leucine-rich repeat receptor-like protein kinase At1g35710"/>
    <property type="match status" value="1"/>
</dbReference>
<dbReference type="FunFam" id="3.80.10.10:FF:001390">
    <property type="entry name" value="Probable leucine-rich repeat receptor-like protein kinase At1g35710"/>
    <property type="match status" value="3"/>
</dbReference>
<dbReference type="Gene3D" id="3.30.200.20">
    <property type="entry name" value="Phosphorylase Kinase, domain 1"/>
    <property type="match status" value="1"/>
</dbReference>
<dbReference type="Gene3D" id="3.80.10.10">
    <property type="entry name" value="Ribonuclease Inhibitor"/>
    <property type="match status" value="5"/>
</dbReference>
<dbReference type="Gene3D" id="1.10.510.10">
    <property type="entry name" value="Transferase(Phosphotransferase) domain 1"/>
    <property type="match status" value="1"/>
</dbReference>
<dbReference type="InterPro" id="IPR011009">
    <property type="entry name" value="Kinase-like_dom_sf"/>
</dbReference>
<dbReference type="InterPro" id="IPR001611">
    <property type="entry name" value="Leu-rich_rpt"/>
</dbReference>
<dbReference type="InterPro" id="IPR003591">
    <property type="entry name" value="Leu-rich_rpt_typical-subtyp"/>
</dbReference>
<dbReference type="InterPro" id="IPR052592">
    <property type="entry name" value="LRR-RLK"/>
</dbReference>
<dbReference type="InterPro" id="IPR032675">
    <property type="entry name" value="LRR_dom_sf"/>
</dbReference>
<dbReference type="InterPro" id="IPR013210">
    <property type="entry name" value="LRR_N_plant-typ"/>
</dbReference>
<dbReference type="InterPro" id="IPR000719">
    <property type="entry name" value="Prot_kinase_dom"/>
</dbReference>
<dbReference type="InterPro" id="IPR017441">
    <property type="entry name" value="Protein_kinase_ATP_BS"/>
</dbReference>
<dbReference type="InterPro" id="IPR008266">
    <property type="entry name" value="Tyr_kinase_AS"/>
</dbReference>
<dbReference type="PANTHER" id="PTHR48054:SF86">
    <property type="entry name" value="MDIS1-INTERACTING RECEPTOR LIKE KINASE 2-LIKE ISOFORM X1"/>
    <property type="match status" value="1"/>
</dbReference>
<dbReference type="PANTHER" id="PTHR48054">
    <property type="entry name" value="RECEPTOR KINASE-LIKE PROTEIN XA21"/>
    <property type="match status" value="1"/>
</dbReference>
<dbReference type="Pfam" id="PF00560">
    <property type="entry name" value="LRR_1"/>
    <property type="match status" value="8"/>
</dbReference>
<dbReference type="Pfam" id="PF13855">
    <property type="entry name" value="LRR_8"/>
    <property type="match status" value="4"/>
</dbReference>
<dbReference type="Pfam" id="PF08263">
    <property type="entry name" value="LRRNT_2"/>
    <property type="match status" value="1"/>
</dbReference>
<dbReference type="Pfam" id="PF00069">
    <property type="entry name" value="Pkinase"/>
    <property type="match status" value="1"/>
</dbReference>
<dbReference type="PRINTS" id="PR00019">
    <property type="entry name" value="LEURICHRPT"/>
</dbReference>
<dbReference type="SMART" id="SM00365">
    <property type="entry name" value="LRR_SD22"/>
    <property type="match status" value="8"/>
</dbReference>
<dbReference type="SMART" id="SM00369">
    <property type="entry name" value="LRR_TYP"/>
    <property type="match status" value="13"/>
</dbReference>
<dbReference type="SUPFAM" id="SSF52058">
    <property type="entry name" value="L domain-like"/>
    <property type="match status" value="1"/>
</dbReference>
<dbReference type="SUPFAM" id="SSF56112">
    <property type="entry name" value="Protein kinase-like (PK-like)"/>
    <property type="match status" value="1"/>
</dbReference>
<dbReference type="SUPFAM" id="SSF52047">
    <property type="entry name" value="RNI-like"/>
    <property type="match status" value="2"/>
</dbReference>
<dbReference type="PROSITE" id="PS51450">
    <property type="entry name" value="LRR"/>
    <property type="match status" value="23"/>
</dbReference>
<dbReference type="PROSITE" id="PS00107">
    <property type="entry name" value="PROTEIN_KINASE_ATP"/>
    <property type="match status" value="1"/>
</dbReference>
<dbReference type="PROSITE" id="PS50011">
    <property type="entry name" value="PROTEIN_KINASE_DOM"/>
    <property type="match status" value="1"/>
</dbReference>
<dbReference type="PROSITE" id="PS00109">
    <property type="entry name" value="PROTEIN_KINASE_TYR"/>
    <property type="match status" value="1"/>
</dbReference>
<keyword id="KW-0025">Alternative splicing</keyword>
<keyword id="KW-0067">ATP-binding</keyword>
<keyword id="KW-0325">Glycoprotein</keyword>
<keyword id="KW-0418">Kinase</keyword>
<keyword id="KW-0433">Leucine-rich repeat</keyword>
<keyword id="KW-0472">Membrane</keyword>
<keyword id="KW-0547">Nucleotide-binding</keyword>
<keyword id="KW-0597">Phosphoprotein</keyword>
<keyword id="KW-0675">Receptor</keyword>
<keyword id="KW-1185">Reference proteome</keyword>
<keyword id="KW-0677">Repeat</keyword>
<keyword id="KW-0723">Serine/threonine-protein kinase</keyword>
<keyword id="KW-0732">Signal</keyword>
<keyword id="KW-0808">Transferase</keyword>
<keyword id="KW-0812">Transmembrane</keyword>
<keyword id="KW-1133">Transmembrane helix</keyword>
<reference key="1">
    <citation type="journal article" date="2000" name="Nature">
        <title>Sequence and analysis of chromosome 1 of the plant Arabidopsis thaliana.</title>
        <authorList>
            <person name="Theologis A."/>
            <person name="Ecker J.R."/>
            <person name="Palm C.J."/>
            <person name="Federspiel N.A."/>
            <person name="Kaul S."/>
            <person name="White O."/>
            <person name="Alonso J."/>
            <person name="Altafi H."/>
            <person name="Araujo R."/>
            <person name="Bowman C.L."/>
            <person name="Brooks S.Y."/>
            <person name="Buehler E."/>
            <person name="Chan A."/>
            <person name="Chao Q."/>
            <person name="Chen H."/>
            <person name="Cheuk R.F."/>
            <person name="Chin C.W."/>
            <person name="Chung M.K."/>
            <person name="Conn L."/>
            <person name="Conway A.B."/>
            <person name="Conway A.R."/>
            <person name="Creasy T.H."/>
            <person name="Dewar K."/>
            <person name="Dunn P."/>
            <person name="Etgu P."/>
            <person name="Feldblyum T.V."/>
            <person name="Feng J.-D."/>
            <person name="Fong B."/>
            <person name="Fujii C.Y."/>
            <person name="Gill J.E."/>
            <person name="Goldsmith A.D."/>
            <person name="Haas B."/>
            <person name="Hansen N.F."/>
            <person name="Hughes B."/>
            <person name="Huizar L."/>
            <person name="Hunter J.L."/>
            <person name="Jenkins J."/>
            <person name="Johnson-Hopson C."/>
            <person name="Khan S."/>
            <person name="Khaykin E."/>
            <person name="Kim C.J."/>
            <person name="Koo H.L."/>
            <person name="Kremenetskaia I."/>
            <person name="Kurtz D.B."/>
            <person name="Kwan A."/>
            <person name="Lam B."/>
            <person name="Langin-Hooper S."/>
            <person name="Lee A."/>
            <person name="Lee J.M."/>
            <person name="Lenz C.A."/>
            <person name="Li J.H."/>
            <person name="Li Y.-P."/>
            <person name="Lin X."/>
            <person name="Liu S.X."/>
            <person name="Liu Z.A."/>
            <person name="Luros J.S."/>
            <person name="Maiti R."/>
            <person name="Marziali A."/>
            <person name="Militscher J."/>
            <person name="Miranda M."/>
            <person name="Nguyen M."/>
            <person name="Nierman W.C."/>
            <person name="Osborne B.I."/>
            <person name="Pai G."/>
            <person name="Peterson J."/>
            <person name="Pham P.K."/>
            <person name="Rizzo M."/>
            <person name="Rooney T."/>
            <person name="Rowley D."/>
            <person name="Sakano H."/>
            <person name="Salzberg S.L."/>
            <person name="Schwartz J.R."/>
            <person name="Shinn P."/>
            <person name="Southwick A.M."/>
            <person name="Sun H."/>
            <person name="Tallon L.J."/>
            <person name="Tambunga G."/>
            <person name="Toriumi M.J."/>
            <person name="Town C.D."/>
            <person name="Utterback T."/>
            <person name="Van Aken S."/>
            <person name="Vaysberg M."/>
            <person name="Vysotskaia V.S."/>
            <person name="Walker M."/>
            <person name="Wu D."/>
            <person name="Yu G."/>
            <person name="Fraser C.M."/>
            <person name="Venter J.C."/>
            <person name="Davis R.W."/>
        </authorList>
    </citation>
    <scope>NUCLEOTIDE SEQUENCE [LARGE SCALE GENOMIC DNA]</scope>
    <source>
        <strain>cv. Columbia</strain>
    </source>
</reference>
<reference key="2">
    <citation type="journal article" date="2017" name="Plant J.">
        <title>Araport11: a complete reannotation of the Arabidopsis thaliana reference genome.</title>
        <authorList>
            <person name="Cheng C.Y."/>
            <person name="Krishnakumar V."/>
            <person name="Chan A.P."/>
            <person name="Thibaud-Nissen F."/>
            <person name="Schobel S."/>
            <person name="Town C.D."/>
        </authorList>
    </citation>
    <scope>GENOME REANNOTATION</scope>
    <source>
        <strain>cv. Columbia</strain>
    </source>
</reference>
<reference key="3">
    <citation type="journal article" date="2009" name="DNA Res.">
        <title>Analysis of multiple occurrences of alternative splicing events in Arabidopsis thaliana using novel sequenced full-length cDNAs.</title>
        <authorList>
            <person name="Iida K."/>
            <person name="Fukami-Kobayashi K."/>
            <person name="Toyoda A."/>
            <person name="Sakaki Y."/>
            <person name="Kobayashi M."/>
            <person name="Seki M."/>
            <person name="Shinozaki K."/>
        </authorList>
    </citation>
    <scope>NUCLEOTIDE SEQUENCE [LARGE SCALE MRNA] (ISOFORM 2)</scope>
    <source>
        <strain>cv. Columbia</strain>
    </source>
</reference>
<reference key="4">
    <citation type="journal article" date="2010" name="BMC Genomics">
        <title>Genome-wide cloning and sequence analysis of leucine-rich repeat receptor-like protein kinase genes in Arabidopsis thaliana.</title>
        <authorList>
            <person name="Gou X."/>
            <person name="He K."/>
            <person name="Yang H."/>
            <person name="Yuan T."/>
            <person name="Lin H."/>
            <person name="Clouse S.D."/>
            <person name="Li J."/>
        </authorList>
    </citation>
    <scope>NUCLEOTIDE SEQUENCE [LARGE SCALE MRNA] (ISOFORM 3)</scope>
    <source>
        <strain>cv. Columbia</strain>
    </source>
</reference>
<reference key="5">
    <citation type="journal article" date="2003" name="Science">
        <title>Empirical analysis of transcriptional activity in the Arabidopsis genome.</title>
        <authorList>
            <person name="Yamada K."/>
            <person name="Lim J."/>
            <person name="Dale J.M."/>
            <person name="Chen H."/>
            <person name="Shinn P."/>
            <person name="Palm C.J."/>
            <person name="Southwick A.M."/>
            <person name="Wu H.C."/>
            <person name="Kim C.J."/>
            <person name="Nguyen M."/>
            <person name="Pham P.K."/>
            <person name="Cheuk R.F."/>
            <person name="Karlin-Newmann G."/>
            <person name="Liu S.X."/>
            <person name="Lam B."/>
            <person name="Sakano H."/>
            <person name="Wu T."/>
            <person name="Yu G."/>
            <person name="Miranda M."/>
            <person name="Quach H.L."/>
            <person name="Tripp M."/>
            <person name="Chang C.H."/>
            <person name="Lee J.M."/>
            <person name="Toriumi M.J."/>
            <person name="Chan M.M."/>
            <person name="Tang C.C."/>
            <person name="Onodera C.S."/>
            <person name="Deng J.M."/>
            <person name="Akiyama K."/>
            <person name="Ansari Y."/>
            <person name="Arakawa T."/>
            <person name="Banh J."/>
            <person name="Banno F."/>
            <person name="Bowser L."/>
            <person name="Brooks S.Y."/>
            <person name="Carninci P."/>
            <person name="Chao Q."/>
            <person name="Choy N."/>
            <person name="Enju A."/>
            <person name="Goldsmith A.D."/>
            <person name="Gurjal M."/>
            <person name="Hansen N.F."/>
            <person name="Hayashizaki Y."/>
            <person name="Johnson-Hopson C."/>
            <person name="Hsuan V.W."/>
            <person name="Iida K."/>
            <person name="Karnes M."/>
            <person name="Khan S."/>
            <person name="Koesema E."/>
            <person name="Ishida J."/>
            <person name="Jiang P.X."/>
            <person name="Jones T."/>
            <person name="Kawai J."/>
            <person name="Kamiya A."/>
            <person name="Meyers C."/>
            <person name="Nakajima M."/>
            <person name="Narusaka M."/>
            <person name="Seki M."/>
            <person name="Sakurai T."/>
            <person name="Satou M."/>
            <person name="Tamse R."/>
            <person name="Vaysberg M."/>
            <person name="Wallender E.K."/>
            <person name="Wong C."/>
            <person name="Yamamura Y."/>
            <person name="Yuan S."/>
            <person name="Shinozaki K."/>
            <person name="Davis R.W."/>
            <person name="Theologis A."/>
            <person name="Ecker J.R."/>
        </authorList>
    </citation>
    <scope>NUCLEOTIDE SEQUENCE [LARGE SCALE MRNA] OF 294-708 (ISOFORM 2)</scope>
    <source>
        <strain>cv. Columbia</strain>
    </source>
</reference>
<proteinExistence type="evidence at protein level"/>
<protein>
    <recommendedName>
        <fullName>Probable leucine-rich repeat receptor-like protein kinase At1g35710</fullName>
        <ecNumber>2.7.11.1</ecNumber>
    </recommendedName>
</protein>
<accession>Q9LP24</accession>
<accession>C0LGF8</accession>
<accession>C0Z3K1</accession>
<accession>Q94B73</accession>
<sequence>MGFAEKNLYDFRFLLFISIILSCSISASATIAEANALLKWKSTFTNSSKLSSWVHDANTNTSFSCTSWYGVSCNSRGSIEELNLTNTGIEGTFQDFPFISLSNLAYVDLSMNLLSGTIPPQFGNLSKLIYFDLSTNHLTGEISPSLGNLKNLTVLYLHQNYLTSVIPSELGNMESMTDLALSQNKLTGSIPSSLGNLKNLMVLYLYENYLTGVIPPELGNMESMTDLALSQNKLTGSIPSTLGNLKNLMVLYLYENYLTGVIPPEIGNMESMTNLALSQNKLTGSIPSSLGNLKNLTLLSLFQNYLTGGIPPKLGNIESMIDLELSNNKLTGSIPSSLGNLKNLTILYLYENYLTGVIPPELGNMESMIDLQLNNNKLTGSIPSSFGNLKNLTYLYLYLNYLTGVIPQELGNMESMINLDLSQNKLTGSVPDSFGNFTKLESLYLRVNHLSGAIPPGVANSSHLTTLILDTNNFTGFFPETVCKGRKLQNISLDYNHLEGPIPKSLRDCKSLIRARFLGNKFTGDIFEAFGIYPDLNFIDFSHNKFHGEISSNWEKSPKLGALIMSNNNITGAIPTEIWNMTQLVELDLSTNNLFGELPEAIGNLTNLSRLRLNGNQLSGRVPAGLSFLTNLESLDLSSNNFSSEIPQTFDSFLKLHDMNLSRNKFDGSIPRLSKLTQLTQLDLSHNQLDGEIPSQLSSLQSLDKLDLSHNNLSGLIPTTFEGMIALTNVDISNNKLEGPLPDTPTFRKATADALEENIGLCSNIPKQRLKPCRELKKPKKNGNLVVWILVPILGVLVILSICANTFTYCIRKRKLQNGRNTDPETGENMSIFSVDGKFKYQDIIESTNEFDPTHLIGTGGYSKVYRANLQDTIIAVKRLHDTIDEEISKPVVKQEFLNEVKALTEIRHRNVVKLFGFCSHRRHTFLIYEYMEKGSLNKLLANDEEAKRLTWTKRINVVKGVAHALSYMHHDRITPIVHRDISSGNILLDNDYTAKISDFGTAKLLKTDSSNWSAVAGTYGYVAPEFAYTMKVTEKCDVYSFGVLILELIIGKHPGDLVSSLSSSPGEALSLRSISDERVLEPRGQNREKLLKMVEMALLCLQANPESRPTMLSISTTFS</sequence>
<gene>
    <name type="ordered locus">At1g35710</name>
    <name type="ORF">F14D7.1</name>
</gene>
<feature type="signal peptide" evidence="4">
    <location>
        <begin position="1"/>
        <end position="29"/>
    </location>
</feature>
<feature type="chain" id="PRO_0000389461" description="Probable leucine-rich repeat receptor-like protein kinase At1g35710">
    <location>
        <begin position="30"/>
        <end position="1120"/>
    </location>
</feature>
<feature type="topological domain" description="Extracellular" evidence="4">
    <location>
        <begin position="30"/>
        <end position="783"/>
    </location>
</feature>
<feature type="transmembrane region" description="Helical" evidence="4">
    <location>
        <begin position="784"/>
        <end position="804"/>
    </location>
</feature>
<feature type="topological domain" description="Cytoplasmic" evidence="4">
    <location>
        <begin position="805"/>
        <end position="1120"/>
    </location>
</feature>
<feature type="repeat" description="LRR 1">
    <location>
        <begin position="78"/>
        <end position="100"/>
    </location>
</feature>
<feature type="repeat" description="LRR 2">
    <location>
        <begin position="103"/>
        <end position="125"/>
    </location>
</feature>
<feature type="repeat" description="LRR 3">
    <location>
        <begin position="127"/>
        <end position="150"/>
    </location>
</feature>
<feature type="repeat" description="LRR 4">
    <location>
        <begin position="151"/>
        <end position="172"/>
    </location>
</feature>
<feature type="repeat" description="LRR 5">
    <location>
        <begin position="175"/>
        <end position="198"/>
    </location>
</feature>
<feature type="repeat" description="LRR 6">
    <location>
        <begin position="199"/>
        <end position="221"/>
    </location>
</feature>
<feature type="repeat" description="LRR 7">
    <location>
        <begin position="223"/>
        <end position="246"/>
    </location>
</feature>
<feature type="repeat" description="LRR 8">
    <location>
        <begin position="247"/>
        <end position="269"/>
    </location>
</feature>
<feature type="repeat" description="LRR 9">
    <location>
        <begin position="271"/>
        <end position="294"/>
    </location>
</feature>
<feature type="repeat" description="LRR 10">
    <location>
        <begin position="295"/>
        <end position="317"/>
    </location>
</feature>
<feature type="repeat" description="LRR 11">
    <location>
        <begin position="319"/>
        <end position="342"/>
    </location>
</feature>
<feature type="repeat" description="LRR 12">
    <location>
        <begin position="343"/>
        <end position="365"/>
    </location>
</feature>
<feature type="repeat" description="LRR 13">
    <location>
        <begin position="367"/>
        <end position="389"/>
    </location>
</feature>
<feature type="repeat" description="LRR 14">
    <location>
        <begin position="391"/>
        <end position="412"/>
    </location>
</feature>
<feature type="repeat" description="LRR 15">
    <location>
        <begin position="415"/>
        <end position="437"/>
    </location>
</feature>
<feature type="repeat" description="LRR 16">
    <location>
        <begin position="439"/>
        <end position="461"/>
    </location>
</feature>
<feature type="repeat" description="LRR 17">
    <location>
        <begin position="463"/>
        <end position="484"/>
    </location>
</feature>
<feature type="repeat" description="LRR 18">
    <location>
        <begin position="487"/>
        <end position="510"/>
    </location>
</feature>
<feature type="repeat" description="LRR 19">
    <location>
        <begin position="535"/>
        <end position="557"/>
    </location>
</feature>
<feature type="repeat" description="LRR 20">
    <location>
        <begin position="559"/>
        <end position="581"/>
    </location>
</feature>
<feature type="repeat" description="LRR 21">
    <location>
        <begin position="583"/>
        <end position="605"/>
    </location>
</feature>
<feature type="repeat" description="LRR 22">
    <location>
        <begin position="607"/>
        <end position="630"/>
    </location>
</feature>
<feature type="repeat" description="LRR 23">
    <location>
        <begin position="631"/>
        <end position="652"/>
    </location>
</feature>
<feature type="repeat" description="LRR 24">
    <location>
        <begin position="655"/>
        <end position="677"/>
    </location>
</feature>
<feature type="repeat" description="LRR 25">
    <location>
        <begin position="678"/>
        <end position="701"/>
    </location>
</feature>
<feature type="repeat" description="LRR 26">
    <location>
        <begin position="702"/>
        <end position="723"/>
    </location>
</feature>
<feature type="repeat" description="LRR 27">
    <location>
        <begin position="726"/>
        <end position="748"/>
    </location>
</feature>
<feature type="domain" description="Protein kinase" evidence="5">
    <location>
        <begin position="851"/>
        <end position="1120"/>
    </location>
</feature>
<feature type="active site" description="Proton acceptor" evidence="5 6">
    <location>
        <position position="981"/>
    </location>
</feature>
<feature type="binding site" evidence="5">
    <location>
        <begin position="857"/>
        <end position="865"/>
    </location>
    <ligand>
        <name>ATP</name>
        <dbReference type="ChEBI" id="CHEBI:30616"/>
    </ligand>
</feature>
<feature type="binding site" evidence="5">
    <location>
        <position position="878"/>
    </location>
    <ligand>
        <name>ATP</name>
        <dbReference type="ChEBI" id="CHEBI:30616"/>
    </ligand>
</feature>
<feature type="modified residue" description="Phosphothreonine" evidence="2">
    <location>
        <position position="848"/>
    </location>
</feature>
<feature type="modified residue" description="Phosphotyrosine" evidence="2">
    <location>
        <position position="929"/>
    </location>
</feature>
<feature type="modified residue" description="Phosphotyrosine" evidence="1">
    <location>
        <position position="968"/>
    </location>
</feature>
<feature type="modified residue" description="Phosphoserine" evidence="3">
    <location>
        <position position="1014"/>
    </location>
</feature>
<feature type="modified residue" description="Phosphotyrosine" evidence="1">
    <location>
        <position position="1022"/>
    </location>
</feature>
<feature type="modified residue" description="Phosphotyrosine" evidence="3">
    <location>
        <position position="1029"/>
    </location>
</feature>
<feature type="modified residue" description="Phosphothreonine" evidence="3">
    <location>
        <position position="1030"/>
    </location>
</feature>
<feature type="glycosylation site" description="N-linked (GlcNAc...) asparagine" evidence="4">
    <location>
        <position position="46"/>
    </location>
</feature>
<feature type="glycosylation site" description="N-linked (GlcNAc...) asparagine" evidence="4">
    <location>
        <position position="60"/>
    </location>
</feature>
<feature type="glycosylation site" description="N-linked (GlcNAc...) asparagine" evidence="4">
    <location>
        <position position="83"/>
    </location>
</feature>
<feature type="glycosylation site" description="N-linked (GlcNAc...) asparagine" evidence="4">
    <location>
        <position position="124"/>
    </location>
</feature>
<feature type="glycosylation site" description="N-linked (GlcNAc...) asparagine" evidence="4">
    <location>
        <position position="151"/>
    </location>
</feature>
<feature type="glycosylation site" description="N-linked (GlcNAc...) asparagine" evidence="4">
    <location>
        <position position="295"/>
    </location>
</feature>
<feature type="glycosylation site" description="N-linked (GlcNAc...) asparagine" evidence="4">
    <location>
        <position position="343"/>
    </location>
</feature>
<feature type="glycosylation site" description="N-linked (GlcNAc...) asparagine" evidence="4">
    <location>
        <position position="391"/>
    </location>
</feature>
<feature type="glycosylation site" description="N-linked (GlcNAc...) asparagine" evidence="4">
    <location>
        <position position="436"/>
    </location>
</feature>
<feature type="glycosylation site" description="N-linked (GlcNAc...) asparagine" evidence="4">
    <location>
        <position position="460"/>
    </location>
</feature>
<feature type="glycosylation site" description="N-linked (GlcNAc...) asparagine" evidence="4">
    <location>
        <position position="473"/>
    </location>
</feature>
<feature type="glycosylation site" description="N-linked (GlcNAc...) asparagine" evidence="4">
    <location>
        <position position="490"/>
    </location>
</feature>
<feature type="glycosylation site" description="N-linked (GlcNAc...) asparagine" evidence="4">
    <location>
        <position position="569"/>
    </location>
</feature>
<feature type="glycosylation site" description="N-linked (GlcNAc...) asparagine" evidence="4">
    <location>
        <position position="580"/>
    </location>
</feature>
<feature type="glycosylation site" description="N-linked (GlcNAc...) asparagine" evidence="4">
    <location>
        <position position="604"/>
    </location>
</feature>
<feature type="glycosylation site" description="N-linked (GlcNAc...) asparagine" evidence="4">
    <location>
        <position position="607"/>
    </location>
</feature>
<feature type="glycosylation site" description="N-linked (GlcNAc...) asparagine" evidence="4">
    <location>
        <position position="641"/>
    </location>
</feature>
<feature type="glycosylation site" description="N-linked (GlcNAc...) asparagine" evidence="4">
    <location>
        <position position="660"/>
    </location>
</feature>
<feature type="glycosylation site" description="N-linked (GlcNAc...) asparagine" evidence="4">
    <location>
        <position position="712"/>
    </location>
</feature>
<feature type="splice variant" id="VSP_038434" description="In isoform 2." evidence="7 8">
    <location>
        <begin position="1"/>
        <end position="412"/>
    </location>
</feature>
<feature type="splice variant" id="VSP_038435" description="In isoform 3." evidence="9">
    <original>ETGENMSIFSVDGKFKYQDIIESTNEFDPTHLIGTGGYSKVYRANLQDTIIAVKRLHDTIDEEISKPVVKQEFLNEVKALTEIRHRNVVKLFGFCSHRRHTFLIYEYMEKGSLNKLLANDEEAKRLTWTKRINVVKGVAHALSYMHHDRITPIVHRDISSGNILLDNDYTAKISDFGTAKLLKTDSSNWSAVAGTYGYVAPEFAYTMKVTEKCDVYSFGVLILELIIGKHPGDLVSSLSSSPGEALSLRSISDERVLEPRGQNREKLLKMVEMALLCLQANPESRPTMLSISTTFS</original>
    <variation>HRNRRIQQSLQSKPPRYNHSR</variation>
    <location>
        <begin position="825"/>
        <end position="1120"/>
    </location>
</feature>
<feature type="sequence conflict" description="In Ref. 3; BAH57280." evidence="10" ref="3">
    <original>G</original>
    <variation>W</variation>
    <location>
        <position position="531"/>
    </location>
</feature>
<feature type="sequence conflict" description="In Ref. 4; ACN59243." evidence="10" ref="4">
    <original>H</original>
    <variation>Y</variation>
    <location>
        <position position="710"/>
    </location>
</feature>
<feature type="sequence conflict" description="In Ref. 5; AAK68748." evidence="10" ref="5">
    <original>G</original>
    <variation>A</variation>
    <location sequence="Q9LP24-2">
        <position position="644"/>
    </location>
</feature>
<feature type="sequence conflict" description="In Ref. 5; AAK68748." evidence="10" ref="5">
    <original>G</original>
    <variation>A</variation>
    <location sequence="Q9LP24-2">
        <position position="655"/>
    </location>
</feature>
<feature type="sequence conflict" description="In Ref. 5; AAK68748." evidence="10" ref="5">
    <original>E</original>
    <variation>A</variation>
    <location sequence="Q9LP24-2">
        <position position="670"/>
    </location>
</feature>
<feature type="sequence conflict" description="In Ref. 5; AAK68748." evidence="10" ref="5">
    <original>E</original>
    <variation>Q</variation>
    <location sequence="Q9LP24-2">
        <position position="677"/>
    </location>
</feature>